<dbReference type="EMBL" id="AF050677">
    <property type="protein sequence ID" value="AAC05680.1"/>
    <property type="molecule type" value="Genomic_DNA"/>
</dbReference>
<dbReference type="SMR" id="O68563"/>
<dbReference type="eggNOG" id="COG0735">
    <property type="taxonomic scope" value="Bacteria"/>
</dbReference>
<dbReference type="PHI-base" id="PHI:3471"/>
<dbReference type="GO" id="GO:0005829">
    <property type="term" value="C:cytosol"/>
    <property type="evidence" value="ECO:0007669"/>
    <property type="project" value="TreeGrafter"/>
</dbReference>
<dbReference type="GO" id="GO:0003700">
    <property type="term" value="F:DNA-binding transcription factor activity"/>
    <property type="evidence" value="ECO:0007669"/>
    <property type="project" value="InterPro"/>
</dbReference>
<dbReference type="GO" id="GO:0000976">
    <property type="term" value="F:transcription cis-regulatory region binding"/>
    <property type="evidence" value="ECO:0007669"/>
    <property type="project" value="TreeGrafter"/>
</dbReference>
<dbReference type="GO" id="GO:0008270">
    <property type="term" value="F:zinc ion binding"/>
    <property type="evidence" value="ECO:0007669"/>
    <property type="project" value="TreeGrafter"/>
</dbReference>
<dbReference type="GO" id="GO:0045892">
    <property type="term" value="P:negative regulation of DNA-templated transcription"/>
    <property type="evidence" value="ECO:0007669"/>
    <property type="project" value="TreeGrafter"/>
</dbReference>
<dbReference type="GO" id="GO:1900705">
    <property type="term" value="P:negative regulation of siderophore biosynthetic process"/>
    <property type="evidence" value="ECO:0007669"/>
    <property type="project" value="TreeGrafter"/>
</dbReference>
<dbReference type="CDD" id="cd07153">
    <property type="entry name" value="Fur_like"/>
    <property type="match status" value="1"/>
</dbReference>
<dbReference type="FunFam" id="1.10.10.10:FF:000007">
    <property type="entry name" value="Ferric uptake regulation protein"/>
    <property type="match status" value="1"/>
</dbReference>
<dbReference type="Gene3D" id="3.30.1490.190">
    <property type="match status" value="1"/>
</dbReference>
<dbReference type="Gene3D" id="1.10.10.10">
    <property type="entry name" value="Winged helix-like DNA-binding domain superfamily/Winged helix DNA-binding domain"/>
    <property type="match status" value="1"/>
</dbReference>
<dbReference type="InterPro" id="IPR002481">
    <property type="entry name" value="FUR"/>
</dbReference>
<dbReference type="InterPro" id="IPR043135">
    <property type="entry name" value="Fur_C"/>
</dbReference>
<dbReference type="InterPro" id="IPR036388">
    <property type="entry name" value="WH-like_DNA-bd_sf"/>
</dbReference>
<dbReference type="InterPro" id="IPR036390">
    <property type="entry name" value="WH_DNA-bd_sf"/>
</dbReference>
<dbReference type="NCBIfam" id="NF006999">
    <property type="entry name" value="PRK09462.1"/>
    <property type="match status" value="1"/>
</dbReference>
<dbReference type="PANTHER" id="PTHR33202:SF2">
    <property type="entry name" value="FERRIC UPTAKE REGULATION PROTEIN"/>
    <property type="match status" value="1"/>
</dbReference>
<dbReference type="PANTHER" id="PTHR33202">
    <property type="entry name" value="ZINC UPTAKE REGULATION PROTEIN"/>
    <property type="match status" value="1"/>
</dbReference>
<dbReference type="Pfam" id="PF01475">
    <property type="entry name" value="FUR"/>
    <property type="match status" value="1"/>
</dbReference>
<dbReference type="SUPFAM" id="SSF46785">
    <property type="entry name" value="Winged helix' DNA-binding domain"/>
    <property type="match status" value="1"/>
</dbReference>
<comment type="function">
    <text evidence="1">Acts as a global negative controlling element, employing Fe(2+) as a cofactor to bind the operator of the repressed genes.</text>
</comment>
<comment type="subunit">
    <text evidence="1">Homodimer.</text>
</comment>
<comment type="subcellular location">
    <subcellularLocation>
        <location evidence="1">Cytoplasm</location>
    </subcellularLocation>
</comment>
<comment type="similarity">
    <text evidence="2">Belongs to the Fur family.</text>
</comment>
<name>FUR_PSEFL</name>
<gene>
    <name type="primary">fur</name>
</gene>
<sequence>MVENSELRKAGLKVTLPRVKILQMLDSAEQRHMSAEDVYKALMESNEDVGLATVYRVLTQFEAAGLVVRHNFDGGHAVFELADGGHHDHMVDLDTNEVIEFTSPEIEALQHKIAEEHGFDLVD</sequence>
<protein>
    <recommendedName>
        <fullName>Ferric uptake regulation protein</fullName>
        <shortName>Ferric uptake regulator</shortName>
    </recommendedName>
</protein>
<organism>
    <name type="scientific">Pseudomonas fluorescens</name>
    <dbReference type="NCBI Taxonomy" id="294"/>
    <lineage>
        <taxon>Bacteria</taxon>
        <taxon>Pseudomonadati</taxon>
        <taxon>Pseudomonadota</taxon>
        <taxon>Gammaproteobacteria</taxon>
        <taxon>Pseudomonadales</taxon>
        <taxon>Pseudomonadaceae</taxon>
        <taxon>Pseudomonas</taxon>
    </lineage>
</organism>
<feature type="chain" id="PRO_0000095568" description="Ferric uptake regulation protein">
    <location>
        <begin position="1"/>
        <end position="123" status="greater than"/>
    </location>
</feature>
<feature type="region of interest" description="DNA-binding" evidence="1">
    <location>
        <begin position="1"/>
        <end position="83"/>
    </location>
</feature>
<feature type="region of interest" description="Dimerization" evidence="1">
    <location>
        <begin position="84"/>
        <end position="123"/>
    </location>
</feature>
<feature type="binding site" evidence="1">
    <location>
        <position position="32"/>
    </location>
    <ligand>
        <name>Zn(2+)</name>
        <dbReference type="ChEBI" id="CHEBI:29105"/>
    </ligand>
</feature>
<feature type="binding site" evidence="1">
    <location>
        <position position="80"/>
    </location>
    <ligand>
        <name>Zn(2+)</name>
        <dbReference type="ChEBI" id="CHEBI:29105"/>
    </ligand>
</feature>
<feature type="binding site" evidence="1">
    <location>
        <position position="86"/>
    </location>
    <ligand>
        <name>Fe cation</name>
        <dbReference type="ChEBI" id="CHEBI:24875"/>
    </ligand>
</feature>
<feature type="binding site" evidence="1">
    <location>
        <position position="88"/>
    </location>
    <ligand>
        <name>Fe cation</name>
        <dbReference type="ChEBI" id="CHEBI:24875"/>
    </ligand>
</feature>
<feature type="binding site" evidence="1">
    <location>
        <position position="89"/>
    </location>
    <ligand>
        <name>Zn(2+)</name>
        <dbReference type="ChEBI" id="CHEBI:29105"/>
    </ligand>
</feature>
<feature type="binding site" evidence="1">
    <location>
        <position position="100"/>
    </location>
    <ligand>
        <name>Zn(2+)</name>
        <dbReference type="ChEBI" id="CHEBI:29105"/>
    </ligand>
</feature>
<feature type="binding site" evidence="1">
    <location>
        <position position="107"/>
    </location>
    <ligand>
        <name>Fe cation</name>
        <dbReference type="ChEBI" id="CHEBI:24875"/>
    </ligand>
</feature>
<feature type="non-terminal residue">
    <location>
        <position position="123"/>
    </location>
</feature>
<accession>O68563</accession>
<keyword id="KW-0963">Cytoplasm</keyword>
<keyword id="KW-0238">DNA-binding</keyword>
<keyword id="KW-0408">Iron</keyword>
<keyword id="KW-0479">Metal-binding</keyword>
<keyword id="KW-0678">Repressor</keyword>
<keyword id="KW-0804">Transcription</keyword>
<keyword id="KW-0805">Transcription regulation</keyword>
<keyword id="KW-0862">Zinc</keyword>
<evidence type="ECO:0000250" key="1"/>
<evidence type="ECO:0000305" key="2"/>
<proteinExistence type="inferred from homology"/>
<reference key="1">
    <citation type="submission" date="1998-02" db="EMBL/GenBank/DDBJ databases">
        <authorList>
            <person name="Ochsner U.O."/>
            <person name="Vasil A.I."/>
            <person name="Johnson Z."/>
            <person name="Vasil M.L."/>
        </authorList>
    </citation>
    <scope>NUCLEOTIDE SEQUENCE [GENOMIC DNA]</scope>
    <source>
        <strain>ATCC 15453 / CIP 104605 / 52-1C</strain>
    </source>
</reference>